<keyword id="KW-0002">3D-structure</keyword>
<keyword id="KW-0903">Direct protein sequencing</keyword>
<keyword id="KW-0378">Hydrolase</keyword>
<keyword id="KW-1185">Reference proteome</keyword>
<proteinExistence type="evidence at protein level"/>
<evidence type="ECO:0000255" key="1">
    <source>
        <dbReference type="PROSITE-ProRule" id="PRU00605"/>
    </source>
</evidence>
<evidence type="ECO:0000269" key="2">
    <source>
    </source>
</evidence>
<evidence type="ECO:0000269" key="3">
    <source>
    </source>
</evidence>
<evidence type="ECO:0000305" key="4"/>
<evidence type="ECO:0007829" key="5">
    <source>
        <dbReference type="PDB" id="6VTV"/>
    </source>
</evidence>
<comment type="function">
    <text evidence="2 3">Involved in the breakdown of putrescine via hydrolysis of the gamma-glutamyl linkage of gamma-glutamyl-gamma-aminobutyrate.</text>
</comment>
<comment type="catalytic activity">
    <reaction evidence="2">
        <text>4-(gamma-L-glutamylamino)butanoate + H2O = 4-aminobutanoate + L-glutamate</text>
        <dbReference type="Rhea" id="RHEA:19737"/>
        <dbReference type="ChEBI" id="CHEBI:15377"/>
        <dbReference type="ChEBI" id="CHEBI:29985"/>
        <dbReference type="ChEBI" id="CHEBI:58800"/>
        <dbReference type="ChEBI" id="CHEBI:59888"/>
        <dbReference type="EC" id="3.5.1.94"/>
    </reaction>
</comment>
<comment type="biophysicochemical properties">
    <kinetics>
        <KM evidence="2 3">2.93 mM for gamma-glutamyl-gamma-aminobutyrate</KM>
        <KM evidence="2 3">18.5 mM for gamma-glutamylputrescine</KM>
    </kinetics>
    <phDependence>
        <text evidence="2 3">Optimum pH is between 8.5 and 9.</text>
    </phDependence>
</comment>
<comment type="pathway">
    <text>Amine and polyamine degradation; putrescine degradation; 4-aminobutanoate from putrescine: step 4/4.</text>
</comment>
<comment type="subunit">
    <text evidence="3">Homodimer.</text>
</comment>
<comment type="induction">
    <text evidence="2 3">Induced by putrescine and nutrient starvation. Repressed by PuuR and low aeration condition. Repressed at the exponential phase and highly induced in early stationary phase.</text>
</comment>
<comment type="disruption phenotype">
    <text evidence="2">Cells lose the hydrolase activity.</text>
</comment>
<comment type="similarity">
    <text evidence="4">Belongs to the peptidase C26 family.</text>
</comment>
<organism>
    <name type="scientific">Escherichia coli (strain K12)</name>
    <dbReference type="NCBI Taxonomy" id="83333"/>
    <lineage>
        <taxon>Bacteria</taxon>
        <taxon>Pseudomonadati</taxon>
        <taxon>Pseudomonadota</taxon>
        <taxon>Gammaproteobacteria</taxon>
        <taxon>Enterobacterales</taxon>
        <taxon>Enterobacteriaceae</taxon>
        <taxon>Escherichia</taxon>
    </lineage>
</organism>
<reference key="1">
    <citation type="journal article" date="1996" name="DNA Res.">
        <title>A 570-kb DNA sequence of the Escherichia coli K-12 genome corresponding to the 28.0-40.1 min region on the linkage map.</title>
        <authorList>
            <person name="Aiba H."/>
            <person name="Baba T."/>
            <person name="Fujita K."/>
            <person name="Hayashi K."/>
            <person name="Inada T."/>
            <person name="Isono K."/>
            <person name="Itoh T."/>
            <person name="Kasai H."/>
            <person name="Kashimoto K."/>
            <person name="Kimura S."/>
            <person name="Kitakawa M."/>
            <person name="Kitagawa M."/>
            <person name="Makino K."/>
            <person name="Miki T."/>
            <person name="Mizobuchi K."/>
            <person name="Mori H."/>
            <person name="Mori T."/>
            <person name="Motomura K."/>
            <person name="Nakade S."/>
            <person name="Nakamura Y."/>
            <person name="Nashimoto H."/>
            <person name="Nishio Y."/>
            <person name="Oshima T."/>
            <person name="Saito N."/>
            <person name="Sampei G."/>
            <person name="Seki Y."/>
            <person name="Sivasundaram S."/>
            <person name="Tagami H."/>
            <person name="Takeda J."/>
            <person name="Takemoto K."/>
            <person name="Takeuchi Y."/>
            <person name="Wada C."/>
            <person name="Yamamoto Y."/>
            <person name="Horiuchi T."/>
        </authorList>
    </citation>
    <scope>NUCLEOTIDE SEQUENCE [LARGE SCALE GENOMIC DNA]</scope>
    <source>
        <strain>K12 / W3110 / ATCC 27325 / DSM 5911</strain>
    </source>
</reference>
<reference key="2">
    <citation type="journal article" date="1997" name="Science">
        <title>The complete genome sequence of Escherichia coli K-12.</title>
        <authorList>
            <person name="Blattner F.R."/>
            <person name="Plunkett G. III"/>
            <person name="Bloch C.A."/>
            <person name="Perna N.T."/>
            <person name="Burland V."/>
            <person name="Riley M."/>
            <person name="Collado-Vides J."/>
            <person name="Glasner J.D."/>
            <person name="Rode C.K."/>
            <person name="Mayhew G.F."/>
            <person name="Gregor J."/>
            <person name="Davis N.W."/>
            <person name="Kirkpatrick H.A."/>
            <person name="Goeden M.A."/>
            <person name="Rose D.J."/>
            <person name="Mau B."/>
            <person name="Shao Y."/>
        </authorList>
    </citation>
    <scope>NUCLEOTIDE SEQUENCE [LARGE SCALE GENOMIC DNA]</scope>
    <source>
        <strain>K12 / MG1655 / ATCC 47076</strain>
    </source>
</reference>
<reference key="3">
    <citation type="journal article" date="2006" name="Mol. Syst. Biol.">
        <title>Highly accurate genome sequences of Escherichia coli K-12 strains MG1655 and W3110.</title>
        <authorList>
            <person name="Hayashi K."/>
            <person name="Morooka N."/>
            <person name="Yamamoto Y."/>
            <person name="Fujita K."/>
            <person name="Isono K."/>
            <person name="Choi S."/>
            <person name="Ohtsubo E."/>
            <person name="Baba T."/>
            <person name="Wanner B.L."/>
            <person name="Mori H."/>
            <person name="Horiuchi T."/>
        </authorList>
    </citation>
    <scope>NUCLEOTIDE SEQUENCE [LARGE SCALE GENOMIC DNA]</scope>
    <source>
        <strain>K12 / W3110 / ATCC 27325 / DSM 5911</strain>
    </source>
</reference>
<reference key="4">
    <citation type="journal article" date="2005" name="J. Biol. Chem.">
        <title>A novel putrescine utilization pathway involves gamma-glutamylated intermediates of Escherichia coli K-12.</title>
        <authorList>
            <person name="Kurihara S."/>
            <person name="Oda S."/>
            <person name="Kato K."/>
            <person name="Kim H.G."/>
            <person name="Koyanagi T."/>
            <person name="Kumagai H."/>
            <person name="Suzuki H."/>
        </authorList>
    </citation>
    <scope>PROTEIN SEQUENCE OF 1-11</scope>
    <scope>FUNCTION AS A GAMMA-GLUTAMYL-GAMMA-AMINOBUTYRATE HYDROLASE</scope>
    <scope>CATALYTIC ACTIVITY</scope>
    <scope>DISRUPTION PHENOTYPE</scope>
    <scope>INDUCTION</scope>
    <scope>BIOPHYSICOCHEMICAL PROPERTIES</scope>
    <scope>NOMENCLATURE</scope>
    <source>
        <strain>K12</strain>
    </source>
</reference>
<reference key="5">
    <citation type="journal article" date="2006" name="FEMS Microbiol. Lett.">
        <title>Gamma-glutamyl-gamma-aminobutyrate hydrolase in the putrescine utilization pathway of Escherichia coli K-12.</title>
        <authorList>
            <person name="Kurihara S."/>
            <person name="Oda S."/>
            <person name="Kumagai H."/>
            <person name="Suzuki H."/>
        </authorList>
    </citation>
    <scope>FUNCTION IN PUTRESCINE DEGRADATION AND AS A GAMMA-GLU-GABA HYDROLASE</scope>
    <scope>MUTAGENESIS OF CYS-114</scope>
    <scope>BIOPHYSICOCHEMICAL PROPERTIES</scope>
    <scope>SUBUNIT</scope>
    <scope>INDUCTION</scope>
    <source>
        <strain>K12</strain>
    </source>
</reference>
<feature type="chain" id="PRO_0000097110" description="Gamma-glutamyl-gamma-aminobutyrate hydrolase PuuD">
    <location>
        <begin position="1"/>
        <end position="254"/>
    </location>
</feature>
<feature type="domain" description="Glutamine amidotransferase type-1" evidence="1">
    <location>
        <begin position="16"/>
        <end position="250"/>
    </location>
</feature>
<feature type="active site" description="Nucleophile" evidence="1">
    <location>
        <position position="114"/>
    </location>
</feature>
<feature type="active site" evidence="1">
    <location>
        <position position="222"/>
    </location>
</feature>
<feature type="active site" evidence="1">
    <location>
        <position position="224"/>
    </location>
</feature>
<feature type="mutagenesis site" description="Lacks the PuuD activity. The expression level is similar to that of the wild-type." evidence="3">
    <original>C</original>
    <variation>A</variation>
    <location>
        <position position="114"/>
    </location>
</feature>
<feature type="strand" evidence="5">
    <location>
        <begin position="9"/>
        <end position="13"/>
    </location>
</feature>
<feature type="strand" evidence="5">
    <location>
        <begin position="15"/>
        <end position="19"/>
    </location>
</feature>
<feature type="strand" evidence="5">
    <location>
        <begin position="22"/>
        <end position="28"/>
    </location>
</feature>
<feature type="helix" evidence="5">
    <location>
        <begin position="29"/>
        <end position="38"/>
    </location>
</feature>
<feature type="strand" evidence="5">
    <location>
        <begin position="41"/>
        <end position="45"/>
    </location>
</feature>
<feature type="helix" evidence="5">
    <location>
        <begin position="47"/>
        <end position="50"/>
    </location>
</feature>
<feature type="helix" evidence="5">
    <location>
        <begin position="52"/>
        <end position="58"/>
    </location>
</feature>
<feature type="helix" evidence="5">
    <location>
        <begin position="59"/>
        <end position="61"/>
    </location>
</feature>
<feature type="strand" evidence="5">
    <location>
        <begin position="63"/>
        <end position="67"/>
    </location>
</feature>
<feature type="helix" evidence="5">
    <location>
        <begin position="76"/>
        <end position="79"/>
    </location>
</feature>
<feature type="strand" evidence="5">
    <location>
        <begin position="86"/>
        <end position="88"/>
    </location>
</feature>
<feature type="helix" evidence="5">
    <location>
        <begin position="90"/>
        <end position="106"/>
    </location>
</feature>
<feature type="strand" evidence="5">
    <location>
        <begin position="110"/>
        <end position="113"/>
    </location>
</feature>
<feature type="helix" evidence="5">
    <location>
        <begin position="115"/>
        <end position="123"/>
    </location>
</feature>
<feature type="strand" evidence="5">
    <location>
        <begin position="128"/>
        <end position="130"/>
    </location>
</feature>
<feature type="helix" evidence="5">
    <location>
        <begin position="132"/>
        <end position="134"/>
    </location>
</feature>
<feature type="helix" evidence="5">
    <location>
        <begin position="149"/>
        <end position="152"/>
    </location>
</feature>
<feature type="strand" evidence="5">
    <location>
        <begin position="157"/>
        <end position="161"/>
    </location>
</feature>
<feature type="helix" evidence="5">
    <location>
        <begin position="166"/>
        <end position="170"/>
    </location>
</feature>
<feature type="strand" evidence="5">
    <location>
        <begin position="175"/>
        <end position="179"/>
    </location>
</feature>
<feature type="strand" evidence="5">
    <location>
        <begin position="194"/>
        <end position="199"/>
    </location>
</feature>
<feature type="strand" evidence="5">
    <location>
        <begin position="205"/>
        <end position="210"/>
    </location>
</feature>
<feature type="strand" evidence="5">
    <location>
        <begin position="213"/>
        <end position="221"/>
    </location>
</feature>
<feature type="turn" evidence="5">
    <location>
        <begin position="223"/>
        <end position="226"/>
    </location>
</feature>
<feature type="helix" evidence="5">
    <location>
        <begin position="227"/>
        <end position="229"/>
    </location>
</feature>
<feature type="helix" evidence="5">
    <location>
        <begin position="231"/>
        <end position="253"/>
    </location>
</feature>
<name>PUUD_ECOLI</name>
<accession>P76038</accession>
<accession>P77761</accession>
<sequence>MENIMNNPVIGVVMCRNRLKGHATQTLQEKYLNAIIHAGGLPIALPHALAEPSLLEQLLPKLDGIYLPGSPSNVQPHLYGENGDEPDADPGRDLLSMAIINAALERRIPIFAICRGLQELVVATGGSLHRKLCEQPELLEHREDPELPVEQQYAPSHEVQVEEGGLLSALLPECSNFWVNSLHGQGAKVVSPRLRVEARSPDGLVEAVSVINHPFALGVQWHPEWNSSEYALSRILFEGFITACQHHIAEKQRL</sequence>
<gene>
    <name type="primary">puuD</name>
    <name type="synonym">ycjL</name>
    <name type="ordered locus">b1298</name>
    <name type="ordered locus">JW1291</name>
</gene>
<protein>
    <recommendedName>
        <fullName>Gamma-glutamyl-gamma-aminobutyrate hydrolase PuuD</fullName>
        <shortName>Gamma-Glu-GABA hydrolase</shortName>
        <ecNumber>3.5.1.94</ecNumber>
    </recommendedName>
</protein>
<dbReference type="EC" id="3.5.1.94"/>
<dbReference type="EMBL" id="U00096">
    <property type="protein sequence ID" value="AAC74380.2"/>
    <property type="molecule type" value="Genomic_DNA"/>
</dbReference>
<dbReference type="EMBL" id="AP009048">
    <property type="protein sequence ID" value="BAA14858.1"/>
    <property type="molecule type" value="Genomic_DNA"/>
</dbReference>
<dbReference type="PIR" id="E64878">
    <property type="entry name" value="E64878"/>
</dbReference>
<dbReference type="RefSeq" id="NP_415814.4">
    <property type="nucleotide sequence ID" value="NC_000913.3"/>
</dbReference>
<dbReference type="RefSeq" id="WP_001300506.1">
    <property type="nucleotide sequence ID" value="NZ_SSZK01000012.1"/>
</dbReference>
<dbReference type="PDB" id="6VTV">
    <property type="method" value="X-ray"/>
    <property type="resolution" value="2.06 A"/>
    <property type="chains" value="A/B=1-254"/>
</dbReference>
<dbReference type="PDBsum" id="6VTV"/>
<dbReference type="SMR" id="P76038"/>
<dbReference type="BioGRID" id="4260141">
    <property type="interactions" value="31"/>
</dbReference>
<dbReference type="FunCoup" id="P76038">
    <property type="interactions" value="99"/>
</dbReference>
<dbReference type="IntAct" id="P76038">
    <property type="interactions" value="1"/>
</dbReference>
<dbReference type="STRING" id="511145.b1298"/>
<dbReference type="MEROPS" id="C26.961"/>
<dbReference type="jPOST" id="P76038"/>
<dbReference type="PaxDb" id="511145-b1298"/>
<dbReference type="EnsemblBacteria" id="AAC74380">
    <property type="protein sequence ID" value="AAC74380"/>
    <property type="gene ID" value="b1298"/>
</dbReference>
<dbReference type="GeneID" id="93775424"/>
<dbReference type="GeneID" id="945882"/>
<dbReference type="KEGG" id="ecj:JW1291"/>
<dbReference type="KEGG" id="eco:b1298"/>
<dbReference type="PATRIC" id="fig|511145.12.peg.1354"/>
<dbReference type="EchoBASE" id="EB3668"/>
<dbReference type="eggNOG" id="COG2071">
    <property type="taxonomic scope" value="Bacteria"/>
</dbReference>
<dbReference type="HOGENOM" id="CLU_030756_0_0_6"/>
<dbReference type="InParanoid" id="P76038"/>
<dbReference type="OMA" id="HRMPPDG"/>
<dbReference type="OrthoDB" id="9813383at2"/>
<dbReference type="PhylomeDB" id="P76038"/>
<dbReference type="BioCyc" id="EcoCyc:G6645-MONOMER"/>
<dbReference type="BioCyc" id="MetaCyc:G6645-MONOMER"/>
<dbReference type="BRENDA" id="3.5.1.94">
    <property type="organism ID" value="2165"/>
</dbReference>
<dbReference type="UniPathway" id="UPA00188">
    <property type="reaction ID" value="UER00883"/>
</dbReference>
<dbReference type="PRO" id="PR:P76038"/>
<dbReference type="Proteomes" id="UP000000625">
    <property type="component" value="Chromosome"/>
</dbReference>
<dbReference type="GO" id="GO:0033969">
    <property type="term" value="F:gamma-glutamyl-gamma-aminobutyrate hydrolase activity"/>
    <property type="evidence" value="ECO:0000314"/>
    <property type="project" value="EcoCyc"/>
</dbReference>
<dbReference type="GO" id="GO:0006598">
    <property type="term" value="P:polyamine catabolic process"/>
    <property type="evidence" value="ECO:0000318"/>
    <property type="project" value="GO_Central"/>
</dbReference>
<dbReference type="GO" id="GO:0009447">
    <property type="term" value="P:putrescine catabolic process"/>
    <property type="evidence" value="ECO:0000315"/>
    <property type="project" value="EcoCyc"/>
</dbReference>
<dbReference type="CDD" id="cd01745">
    <property type="entry name" value="GATase1_2"/>
    <property type="match status" value="1"/>
</dbReference>
<dbReference type="FunFam" id="3.40.50.880:FF:000030">
    <property type="entry name" value="Gamma-glutamyl-gamma-aminobutyrate hydrolase PuuD"/>
    <property type="match status" value="1"/>
</dbReference>
<dbReference type="Gene3D" id="3.40.50.880">
    <property type="match status" value="1"/>
</dbReference>
<dbReference type="InterPro" id="IPR029062">
    <property type="entry name" value="Class_I_gatase-like"/>
</dbReference>
<dbReference type="InterPro" id="IPR011697">
    <property type="entry name" value="Peptidase_C26"/>
</dbReference>
<dbReference type="InterPro" id="IPR044668">
    <property type="entry name" value="PuuD-like"/>
</dbReference>
<dbReference type="NCBIfam" id="NF008471">
    <property type="entry name" value="PRK11366.1"/>
    <property type="match status" value="1"/>
</dbReference>
<dbReference type="PANTHER" id="PTHR43235">
    <property type="entry name" value="GLUTAMINE AMIDOTRANSFERASE PB2B2.05-RELATED"/>
    <property type="match status" value="1"/>
</dbReference>
<dbReference type="PANTHER" id="PTHR43235:SF1">
    <property type="entry name" value="GLUTAMINE AMIDOTRANSFERASE PB2B2.05-RELATED"/>
    <property type="match status" value="1"/>
</dbReference>
<dbReference type="Pfam" id="PF07722">
    <property type="entry name" value="Peptidase_C26"/>
    <property type="match status" value="1"/>
</dbReference>
<dbReference type="SUPFAM" id="SSF52317">
    <property type="entry name" value="Class I glutamine amidotransferase-like"/>
    <property type="match status" value="1"/>
</dbReference>
<dbReference type="PROSITE" id="PS51273">
    <property type="entry name" value="GATASE_TYPE_1"/>
    <property type="match status" value="1"/>
</dbReference>